<name>RL32_SYNWW</name>
<feature type="chain" id="PRO_0000296590" description="Large ribosomal subunit protein bL32">
    <location>
        <begin position="1"/>
        <end position="56"/>
    </location>
</feature>
<feature type="region of interest" description="Disordered" evidence="2">
    <location>
        <begin position="1"/>
        <end position="21"/>
    </location>
</feature>
<feature type="compositionally biased region" description="Basic residues" evidence="2">
    <location>
        <begin position="7"/>
        <end position="19"/>
    </location>
</feature>
<gene>
    <name evidence="1" type="primary">rpmF</name>
    <name type="ordered locus">Swol_0770</name>
</gene>
<proteinExistence type="inferred from homology"/>
<keyword id="KW-1185">Reference proteome</keyword>
<keyword id="KW-0687">Ribonucleoprotein</keyword>
<keyword id="KW-0689">Ribosomal protein</keyword>
<sequence>MGVPQRRQSHARKNKRRSEWRKIDKPGLVECPQCHELKMPHRACLNCGYYKSNKVM</sequence>
<reference key="1">
    <citation type="journal article" date="2010" name="Environ. Microbiol.">
        <title>The genome of Syntrophomonas wolfei: new insights into syntrophic metabolism and biohydrogen production.</title>
        <authorList>
            <person name="Sieber J.R."/>
            <person name="Sims D.R."/>
            <person name="Han C."/>
            <person name="Kim E."/>
            <person name="Lykidis A."/>
            <person name="Lapidus A.L."/>
            <person name="McDonnald E."/>
            <person name="Rohlin L."/>
            <person name="Culley D.E."/>
            <person name="Gunsalus R."/>
            <person name="McInerney M.J."/>
        </authorList>
    </citation>
    <scope>NUCLEOTIDE SEQUENCE [LARGE SCALE GENOMIC DNA]</scope>
    <source>
        <strain>DSM 2245B / Goettingen</strain>
    </source>
</reference>
<evidence type="ECO:0000255" key="1">
    <source>
        <dbReference type="HAMAP-Rule" id="MF_00340"/>
    </source>
</evidence>
<evidence type="ECO:0000256" key="2">
    <source>
        <dbReference type="SAM" id="MobiDB-lite"/>
    </source>
</evidence>
<evidence type="ECO:0000305" key="3"/>
<organism>
    <name type="scientific">Syntrophomonas wolfei subsp. wolfei (strain DSM 2245B / Goettingen)</name>
    <dbReference type="NCBI Taxonomy" id="335541"/>
    <lineage>
        <taxon>Bacteria</taxon>
        <taxon>Bacillati</taxon>
        <taxon>Bacillota</taxon>
        <taxon>Clostridia</taxon>
        <taxon>Eubacteriales</taxon>
        <taxon>Syntrophomonadaceae</taxon>
        <taxon>Syntrophomonas</taxon>
    </lineage>
</organism>
<comment type="similarity">
    <text evidence="1">Belongs to the bacterial ribosomal protein bL32 family.</text>
</comment>
<dbReference type="EMBL" id="CP000448">
    <property type="protein sequence ID" value="ABI68091.1"/>
    <property type="molecule type" value="Genomic_DNA"/>
</dbReference>
<dbReference type="RefSeq" id="WP_011640196.1">
    <property type="nucleotide sequence ID" value="NC_008346.1"/>
</dbReference>
<dbReference type="SMR" id="Q0AYW3"/>
<dbReference type="STRING" id="335541.Swol_0770"/>
<dbReference type="KEGG" id="swo:Swol_0770"/>
<dbReference type="eggNOG" id="COG0333">
    <property type="taxonomic scope" value="Bacteria"/>
</dbReference>
<dbReference type="HOGENOM" id="CLU_129084_1_3_9"/>
<dbReference type="OrthoDB" id="9812874at2"/>
<dbReference type="Proteomes" id="UP000001968">
    <property type="component" value="Chromosome"/>
</dbReference>
<dbReference type="GO" id="GO:0015934">
    <property type="term" value="C:large ribosomal subunit"/>
    <property type="evidence" value="ECO:0007669"/>
    <property type="project" value="InterPro"/>
</dbReference>
<dbReference type="GO" id="GO:0003735">
    <property type="term" value="F:structural constituent of ribosome"/>
    <property type="evidence" value="ECO:0007669"/>
    <property type="project" value="InterPro"/>
</dbReference>
<dbReference type="GO" id="GO:0006412">
    <property type="term" value="P:translation"/>
    <property type="evidence" value="ECO:0007669"/>
    <property type="project" value="UniProtKB-UniRule"/>
</dbReference>
<dbReference type="HAMAP" id="MF_00340">
    <property type="entry name" value="Ribosomal_bL32"/>
    <property type="match status" value="1"/>
</dbReference>
<dbReference type="InterPro" id="IPR002677">
    <property type="entry name" value="Ribosomal_bL32"/>
</dbReference>
<dbReference type="InterPro" id="IPR044957">
    <property type="entry name" value="Ribosomal_bL32_bact"/>
</dbReference>
<dbReference type="InterPro" id="IPR011332">
    <property type="entry name" value="Ribosomal_zn-bd"/>
</dbReference>
<dbReference type="NCBIfam" id="TIGR01031">
    <property type="entry name" value="rpmF_bact"/>
    <property type="match status" value="1"/>
</dbReference>
<dbReference type="PANTHER" id="PTHR35534">
    <property type="entry name" value="50S RIBOSOMAL PROTEIN L32"/>
    <property type="match status" value="1"/>
</dbReference>
<dbReference type="PANTHER" id="PTHR35534:SF1">
    <property type="entry name" value="LARGE RIBOSOMAL SUBUNIT PROTEIN BL32"/>
    <property type="match status" value="1"/>
</dbReference>
<dbReference type="Pfam" id="PF01783">
    <property type="entry name" value="Ribosomal_L32p"/>
    <property type="match status" value="1"/>
</dbReference>
<dbReference type="SUPFAM" id="SSF57829">
    <property type="entry name" value="Zn-binding ribosomal proteins"/>
    <property type="match status" value="1"/>
</dbReference>
<accession>Q0AYW3</accession>
<protein>
    <recommendedName>
        <fullName evidence="1">Large ribosomal subunit protein bL32</fullName>
    </recommendedName>
    <alternativeName>
        <fullName evidence="3">50S ribosomal protein L32</fullName>
    </alternativeName>
</protein>